<proteinExistence type="evidence at protein level"/>
<evidence type="ECO:0000256" key="1">
    <source>
        <dbReference type="SAM" id="MobiDB-lite"/>
    </source>
</evidence>
<evidence type="ECO:0000269" key="2">
    <source>
    </source>
</evidence>
<evidence type="ECO:0000269" key="3">
    <source>
    </source>
</evidence>
<evidence type="ECO:0000305" key="4"/>
<comment type="subcellular location">
    <subcellularLocation>
        <location evidence="2">Cytoplasm</location>
    </subcellularLocation>
    <subcellularLocation>
        <location evidence="2">Nucleus</location>
    </subcellularLocation>
</comment>
<comment type="similarity">
    <text evidence="4">Belongs to the UPF0649 family.</text>
</comment>
<keyword id="KW-0963">Cytoplasm</keyword>
<keyword id="KW-0539">Nucleus</keyword>
<keyword id="KW-0597">Phosphoprotein</keyword>
<keyword id="KW-1185">Reference proteome</keyword>
<organism>
    <name type="scientific">Schizosaccharomyces pombe (strain 972 / ATCC 24843)</name>
    <name type="common">Fission yeast</name>
    <dbReference type="NCBI Taxonomy" id="284812"/>
    <lineage>
        <taxon>Eukaryota</taxon>
        <taxon>Fungi</taxon>
        <taxon>Dikarya</taxon>
        <taxon>Ascomycota</taxon>
        <taxon>Taphrinomycotina</taxon>
        <taxon>Schizosaccharomycetes</taxon>
        <taxon>Schizosaccharomycetales</taxon>
        <taxon>Schizosaccharomycetaceae</taxon>
        <taxon>Schizosaccharomyces</taxon>
    </lineage>
</organism>
<protein>
    <recommendedName>
        <fullName>UPF0649 protein C1442.02</fullName>
    </recommendedName>
</protein>
<name>YQ72_SCHPO</name>
<accession>Q76PC4</accession>
<reference key="1">
    <citation type="journal article" date="2002" name="Nature">
        <title>The genome sequence of Schizosaccharomyces pombe.</title>
        <authorList>
            <person name="Wood V."/>
            <person name="Gwilliam R."/>
            <person name="Rajandream M.A."/>
            <person name="Lyne M.H."/>
            <person name="Lyne R."/>
            <person name="Stewart A."/>
            <person name="Sgouros J.G."/>
            <person name="Peat N."/>
            <person name="Hayles J."/>
            <person name="Baker S.G."/>
            <person name="Basham D."/>
            <person name="Bowman S."/>
            <person name="Brooks K."/>
            <person name="Brown D."/>
            <person name="Brown S."/>
            <person name="Chillingworth T."/>
            <person name="Churcher C.M."/>
            <person name="Collins M."/>
            <person name="Connor R."/>
            <person name="Cronin A."/>
            <person name="Davis P."/>
            <person name="Feltwell T."/>
            <person name="Fraser A."/>
            <person name="Gentles S."/>
            <person name="Goble A."/>
            <person name="Hamlin N."/>
            <person name="Harris D.E."/>
            <person name="Hidalgo J."/>
            <person name="Hodgson G."/>
            <person name="Holroyd S."/>
            <person name="Hornsby T."/>
            <person name="Howarth S."/>
            <person name="Huckle E.J."/>
            <person name="Hunt S."/>
            <person name="Jagels K."/>
            <person name="James K.D."/>
            <person name="Jones L."/>
            <person name="Jones M."/>
            <person name="Leather S."/>
            <person name="McDonald S."/>
            <person name="McLean J."/>
            <person name="Mooney P."/>
            <person name="Moule S."/>
            <person name="Mungall K.L."/>
            <person name="Murphy L.D."/>
            <person name="Niblett D."/>
            <person name="Odell C."/>
            <person name="Oliver K."/>
            <person name="O'Neil S."/>
            <person name="Pearson D."/>
            <person name="Quail M.A."/>
            <person name="Rabbinowitsch E."/>
            <person name="Rutherford K.M."/>
            <person name="Rutter S."/>
            <person name="Saunders D."/>
            <person name="Seeger K."/>
            <person name="Sharp S."/>
            <person name="Skelton J."/>
            <person name="Simmonds M.N."/>
            <person name="Squares R."/>
            <person name="Squares S."/>
            <person name="Stevens K."/>
            <person name="Taylor K."/>
            <person name="Taylor R.G."/>
            <person name="Tivey A."/>
            <person name="Walsh S.V."/>
            <person name="Warren T."/>
            <person name="Whitehead S."/>
            <person name="Woodward J.R."/>
            <person name="Volckaert G."/>
            <person name="Aert R."/>
            <person name="Robben J."/>
            <person name="Grymonprez B."/>
            <person name="Weltjens I."/>
            <person name="Vanstreels E."/>
            <person name="Rieger M."/>
            <person name="Schaefer M."/>
            <person name="Mueller-Auer S."/>
            <person name="Gabel C."/>
            <person name="Fuchs M."/>
            <person name="Duesterhoeft A."/>
            <person name="Fritzc C."/>
            <person name="Holzer E."/>
            <person name="Moestl D."/>
            <person name="Hilbert H."/>
            <person name="Borzym K."/>
            <person name="Langer I."/>
            <person name="Beck A."/>
            <person name="Lehrach H."/>
            <person name="Reinhardt R."/>
            <person name="Pohl T.M."/>
            <person name="Eger P."/>
            <person name="Zimmermann W."/>
            <person name="Wedler H."/>
            <person name="Wambutt R."/>
            <person name="Purnelle B."/>
            <person name="Goffeau A."/>
            <person name="Cadieu E."/>
            <person name="Dreano S."/>
            <person name="Gloux S."/>
            <person name="Lelaure V."/>
            <person name="Mottier S."/>
            <person name="Galibert F."/>
            <person name="Aves S.J."/>
            <person name="Xiang Z."/>
            <person name="Hunt C."/>
            <person name="Moore K."/>
            <person name="Hurst S.M."/>
            <person name="Lucas M."/>
            <person name="Rochet M."/>
            <person name="Gaillardin C."/>
            <person name="Tallada V.A."/>
            <person name="Garzon A."/>
            <person name="Thode G."/>
            <person name="Daga R.R."/>
            <person name="Cruzado L."/>
            <person name="Jimenez J."/>
            <person name="Sanchez M."/>
            <person name="del Rey F."/>
            <person name="Benito J."/>
            <person name="Dominguez A."/>
            <person name="Revuelta J.L."/>
            <person name="Moreno S."/>
            <person name="Armstrong J."/>
            <person name="Forsburg S.L."/>
            <person name="Cerutti L."/>
            <person name="Lowe T."/>
            <person name="McCombie W.R."/>
            <person name="Paulsen I."/>
            <person name="Potashkin J."/>
            <person name="Shpakovski G.V."/>
            <person name="Ussery D."/>
            <person name="Barrell B.G."/>
            <person name="Nurse P."/>
        </authorList>
    </citation>
    <scope>NUCLEOTIDE SEQUENCE [LARGE SCALE GENOMIC DNA]</scope>
    <source>
        <strain>972 / ATCC 24843</strain>
    </source>
</reference>
<reference key="2">
    <citation type="journal article" date="2006" name="Nat. Biotechnol.">
        <title>ORFeome cloning and global analysis of protein localization in the fission yeast Schizosaccharomyces pombe.</title>
        <authorList>
            <person name="Matsuyama A."/>
            <person name="Arai R."/>
            <person name="Yashiroda Y."/>
            <person name="Shirai A."/>
            <person name="Kamata A."/>
            <person name="Sekido S."/>
            <person name="Kobayashi Y."/>
            <person name="Hashimoto A."/>
            <person name="Hamamoto M."/>
            <person name="Hiraoka Y."/>
            <person name="Horinouchi S."/>
            <person name="Yoshida M."/>
        </authorList>
    </citation>
    <scope>SUBCELLULAR LOCATION [LARGE SCALE ANALYSIS]</scope>
</reference>
<reference key="3">
    <citation type="journal article" date="2008" name="J. Proteome Res.">
        <title>Phosphoproteome analysis of fission yeast.</title>
        <authorList>
            <person name="Wilson-Grady J.T."/>
            <person name="Villen J."/>
            <person name="Gygi S.P."/>
        </authorList>
    </citation>
    <scope>PHOSPHORYLATION [LARGE SCALE ANALYSIS] AT SER-285 AND SER-286</scope>
    <scope>IDENTIFICATION BY MASS SPECTROMETRY</scope>
</reference>
<gene>
    <name type="ORF">SPCC1442.02</name>
    <name type="ORF">SPCC1450.18</name>
</gene>
<sequence length="562" mass="64175">MDWKEAIPGAAKVAIETKDYITYSTLLELILEEARIKDIDEQRELIKCLHEELKQEKNDHITREISWDIIGMVLPYVGKVQNEADEFVDFLAKNGNPREVFLKCCELLINGGFESPQQFISLNSAILSALHRISTKRPVLFVNNFLISLFSGLANILQIDSDELYCVWKISISSIQDAMHRFPVSECYLACLKACSILAQLFLSKETLMLSFRSLLQTKDQYAEFREELSGATTNCDKLDTLSKSIINIFDYLLSHLPESWSIITEHMAQELTKATYVSQSSSISSEDEEIAKNADVPAEVDNNSTKADDKRDEIEFDTKGCLALLTIKSFYQSGNFFLDFLKEKFPSTILETLQQLVSWEIQLDSVGFKDIAVYQGYLLDLPHFQVPDSELEHLSSLLHGYHFMASSTELPWLRVTCNAIVTKCLDSQLPSVRLSYILDTLEECPLLNIKTAILNYYQKQCSLVKDSNEEGLKNFVSPNTLLDVFKVFDAMEDVELDSQSLSYIHQTLVFLYSLEIQNLLSQNQFPTVYFTKISDQINNYEGELPTDGLKYYIELLNSRNK</sequence>
<feature type="chain" id="PRO_0000350760" description="UPF0649 protein C1442.02">
    <location>
        <begin position="1"/>
        <end position="562"/>
    </location>
</feature>
<feature type="region of interest" description="Disordered" evidence="1">
    <location>
        <begin position="288"/>
        <end position="308"/>
    </location>
</feature>
<feature type="modified residue" description="Phosphoserine" evidence="3">
    <location>
        <position position="285"/>
    </location>
</feature>
<feature type="modified residue" description="Phosphoserine" evidence="3">
    <location>
        <position position="286"/>
    </location>
</feature>
<dbReference type="EMBL" id="CU329672">
    <property type="protein sequence ID" value="CAB40185.1"/>
    <property type="molecule type" value="Genomic_DNA"/>
</dbReference>
<dbReference type="PIR" id="T40967">
    <property type="entry name" value="T40967"/>
</dbReference>
<dbReference type="RefSeq" id="NP_588317.1">
    <property type="nucleotide sequence ID" value="NM_001023307.2"/>
</dbReference>
<dbReference type="SMR" id="Q76PC4"/>
<dbReference type="BioGRID" id="275283">
    <property type="interactions" value="29"/>
</dbReference>
<dbReference type="FunCoup" id="Q76PC4">
    <property type="interactions" value="417"/>
</dbReference>
<dbReference type="STRING" id="284812.Q76PC4"/>
<dbReference type="iPTMnet" id="Q76PC4"/>
<dbReference type="PaxDb" id="4896-SPCC1442.02.1"/>
<dbReference type="EnsemblFungi" id="SPCC1442.02.1">
    <property type="protein sequence ID" value="SPCC1442.02.1:pep"/>
    <property type="gene ID" value="SPCC1442.02"/>
</dbReference>
<dbReference type="GeneID" id="2538698"/>
<dbReference type="KEGG" id="spo:2538698"/>
<dbReference type="PomBase" id="SPCC1442.02"/>
<dbReference type="VEuPathDB" id="FungiDB:SPCC1442.02"/>
<dbReference type="HOGENOM" id="CLU_499820_0_0_1"/>
<dbReference type="InParanoid" id="Q76PC4"/>
<dbReference type="OMA" id="EPWIRLI"/>
<dbReference type="PRO" id="PR:Q76PC4"/>
<dbReference type="Proteomes" id="UP000002485">
    <property type="component" value="Chromosome III"/>
</dbReference>
<dbReference type="GO" id="GO:0005737">
    <property type="term" value="C:cytoplasm"/>
    <property type="evidence" value="ECO:0007005"/>
    <property type="project" value="PomBase"/>
</dbReference>
<dbReference type="GO" id="GO:0005829">
    <property type="term" value="C:cytosol"/>
    <property type="evidence" value="ECO:0007005"/>
    <property type="project" value="PomBase"/>
</dbReference>
<dbReference type="GO" id="GO:0005634">
    <property type="term" value="C:nucleus"/>
    <property type="evidence" value="ECO:0007005"/>
    <property type="project" value="PomBase"/>
</dbReference>
<dbReference type="GO" id="GO:0055105">
    <property type="term" value="F:ubiquitin-protein transferase inhibitor activity"/>
    <property type="evidence" value="ECO:0000318"/>
    <property type="project" value="GO_Central"/>
</dbReference>
<dbReference type="GO" id="GO:0032434">
    <property type="term" value="P:regulation of proteasomal ubiquitin-dependent protein catabolic process"/>
    <property type="evidence" value="ECO:0000250"/>
    <property type="project" value="PomBase"/>
</dbReference>
<dbReference type="InterPro" id="IPR019516">
    <property type="entry name" value="Glomulin/ALF4"/>
</dbReference>
<dbReference type="InterPro" id="IPR013877">
    <property type="entry name" value="YAP-bd/ALF4/Glomulin"/>
</dbReference>
<dbReference type="PANTHER" id="PTHR15430">
    <property type="entry name" value="GLOMULIN"/>
    <property type="match status" value="1"/>
</dbReference>
<dbReference type="PANTHER" id="PTHR15430:SF1">
    <property type="entry name" value="GLOMULIN"/>
    <property type="match status" value="1"/>
</dbReference>
<dbReference type="Pfam" id="PF08568">
    <property type="entry name" value="Kinetochor_Ybp2"/>
    <property type="match status" value="1"/>
</dbReference>